<dbReference type="EC" id="3.6.1.-" evidence="1"/>
<dbReference type="EMBL" id="CP000941">
    <property type="protein sequence ID" value="ACA12725.1"/>
    <property type="molecule type" value="Genomic_DNA"/>
</dbReference>
<dbReference type="RefSeq" id="WP_004083624.1">
    <property type="nucleotide sequence ID" value="NC_010513.1"/>
</dbReference>
<dbReference type="SMR" id="B0U4E6"/>
<dbReference type="KEGG" id="xfm:Xfasm12_1839"/>
<dbReference type="HOGENOM" id="CLU_087195_3_1_6"/>
<dbReference type="GO" id="GO:0016462">
    <property type="term" value="F:pyrophosphatase activity"/>
    <property type="evidence" value="ECO:0007669"/>
    <property type="project" value="UniProtKB-ARBA"/>
</dbReference>
<dbReference type="CDD" id="cd03671">
    <property type="entry name" value="NUDIX_Ap4A_hydrolase_plant_like"/>
    <property type="match status" value="1"/>
</dbReference>
<dbReference type="FunFam" id="3.90.79.10:FF:000001">
    <property type="entry name" value="RNA pyrophosphohydrolase"/>
    <property type="match status" value="1"/>
</dbReference>
<dbReference type="Gene3D" id="3.90.79.10">
    <property type="entry name" value="Nucleoside Triphosphate Pyrophosphohydrolase"/>
    <property type="match status" value="1"/>
</dbReference>
<dbReference type="HAMAP" id="MF_00298">
    <property type="entry name" value="Nudix_RppH"/>
    <property type="match status" value="1"/>
</dbReference>
<dbReference type="InterPro" id="IPR015797">
    <property type="entry name" value="NUDIX_hydrolase-like_dom_sf"/>
</dbReference>
<dbReference type="InterPro" id="IPR020084">
    <property type="entry name" value="NUDIX_hydrolase_CS"/>
</dbReference>
<dbReference type="InterPro" id="IPR000086">
    <property type="entry name" value="NUDIX_hydrolase_dom"/>
</dbReference>
<dbReference type="InterPro" id="IPR022927">
    <property type="entry name" value="RppH"/>
</dbReference>
<dbReference type="NCBIfam" id="NF001937">
    <property type="entry name" value="PRK00714.1-4"/>
    <property type="match status" value="1"/>
</dbReference>
<dbReference type="NCBIfam" id="NF001938">
    <property type="entry name" value="PRK00714.1-5"/>
    <property type="match status" value="1"/>
</dbReference>
<dbReference type="PANTHER" id="PTHR43736">
    <property type="entry name" value="ADP-RIBOSE PYROPHOSPHATASE"/>
    <property type="match status" value="1"/>
</dbReference>
<dbReference type="PANTHER" id="PTHR43736:SF1">
    <property type="entry name" value="DIHYDRONEOPTERIN TRIPHOSPHATE DIPHOSPHATASE"/>
    <property type="match status" value="1"/>
</dbReference>
<dbReference type="Pfam" id="PF00293">
    <property type="entry name" value="NUDIX"/>
    <property type="match status" value="1"/>
</dbReference>
<dbReference type="SUPFAM" id="SSF55811">
    <property type="entry name" value="Nudix"/>
    <property type="match status" value="1"/>
</dbReference>
<dbReference type="PROSITE" id="PS51462">
    <property type="entry name" value="NUDIX"/>
    <property type="match status" value="1"/>
</dbReference>
<dbReference type="PROSITE" id="PS00893">
    <property type="entry name" value="NUDIX_BOX"/>
    <property type="match status" value="1"/>
</dbReference>
<keyword id="KW-0378">Hydrolase</keyword>
<proteinExistence type="inferred from homology"/>
<gene>
    <name evidence="1" type="primary">rppH</name>
    <name evidence="1" type="synonym">nudH</name>
    <name type="ordered locus">Xfasm12_1839</name>
</gene>
<feature type="chain" id="PRO_1000115307" description="RNA pyrophosphohydrolase">
    <location>
        <begin position="1"/>
        <end position="190"/>
    </location>
</feature>
<feature type="domain" description="Nudix hydrolase" evidence="1">
    <location>
        <begin position="6"/>
        <end position="149"/>
    </location>
</feature>
<feature type="short sequence motif" description="Nudix box">
    <location>
        <begin position="38"/>
        <end position="59"/>
    </location>
</feature>
<reference key="1">
    <citation type="journal article" date="2010" name="J. Bacteriol.">
        <title>Whole genome sequences of two Xylella fastidiosa strains (M12 and M23) causing almond leaf scorch disease in California.</title>
        <authorList>
            <person name="Chen J."/>
            <person name="Xie G."/>
            <person name="Han S."/>
            <person name="Chertkov O."/>
            <person name="Sims D."/>
            <person name="Civerolo E.L."/>
        </authorList>
    </citation>
    <scope>NUCLEOTIDE SEQUENCE [LARGE SCALE GENOMIC DNA]</scope>
    <source>
        <strain>M12</strain>
    </source>
</reference>
<name>RPPH_XYLFM</name>
<comment type="function">
    <text evidence="1">Accelerates the degradation of transcripts by removing pyrophosphate from the 5'-end of triphosphorylated RNA, leading to a more labile monophosphorylated state that can stimulate subsequent ribonuclease cleavage.</text>
</comment>
<comment type="cofactor">
    <cofactor evidence="1">
        <name>a divalent metal cation</name>
        <dbReference type="ChEBI" id="CHEBI:60240"/>
    </cofactor>
</comment>
<comment type="similarity">
    <text evidence="1">Belongs to the Nudix hydrolase family. RppH subfamily.</text>
</comment>
<evidence type="ECO:0000255" key="1">
    <source>
        <dbReference type="HAMAP-Rule" id="MF_00298"/>
    </source>
</evidence>
<protein>
    <recommendedName>
        <fullName evidence="1">RNA pyrophosphohydrolase</fullName>
        <ecNumber evidence="1">3.6.1.-</ecNumber>
    </recommendedName>
    <alternativeName>
        <fullName evidence="1">(Di)nucleoside polyphosphate hydrolase</fullName>
    </alternativeName>
</protein>
<organism>
    <name type="scientific">Xylella fastidiosa (strain M12)</name>
    <dbReference type="NCBI Taxonomy" id="405440"/>
    <lineage>
        <taxon>Bacteria</taxon>
        <taxon>Pseudomonadati</taxon>
        <taxon>Pseudomonadota</taxon>
        <taxon>Gammaproteobacteria</taxon>
        <taxon>Lysobacterales</taxon>
        <taxon>Lysobacteraceae</taxon>
        <taxon>Xylella</taxon>
    </lineage>
</organism>
<accession>B0U4E6</accession>
<sequence length="190" mass="22214">MIDPDGYRPNVGIVLMRRDGQVFWGRRVRRDGWQFPQGGMHSDETPVEAMYRELNEEIGLLPEHVQLVGATPGWLRYRLPSQAVRCNRSQMCIGQKQVWFLLQLIGDESHVQLDQSENPEFDHWRWVSFWYPIEHVVMFKRGVYARALCQLASLAQQVVGLEVGTMPQYVQDICLLNVGYKHLPNWVSRY</sequence>